<comment type="function">
    <text evidence="1">Auxillary component of the N-terminal acetyltransferase C (NatC) complex which catalyzes acetylation of N-terminal methionine residues. N-terminal acetylation protects proteins from ubiquitination and degradation by the N-end rule pathway. Involved in regulation of apoptosis and proliferation of smooth muscle cells.</text>
</comment>
<comment type="subunit">
    <text evidence="1">Component of the N-terminal acetyltransferase C (NatC) complex, which is composed of NAA35, NAA38 and NAA30.</text>
</comment>
<comment type="subcellular location">
    <subcellularLocation>
        <location evidence="1">Cytoplasm</location>
    </subcellularLocation>
</comment>
<comment type="similarity">
    <text evidence="3">Belongs to the MAK10 family.</text>
</comment>
<sequence length="725" mass="83612">MVMKASVDDDDSGWELSMPEKMEKSNTNWVDITQDFEEACRELKLGELLHDKLFGLFEAMSAIEMMDPKMDAGMIGNQVNRKVLNFEQAIKDGTIKIKDLTLPELIGIMDTCFCCLITWLEGHSLAQTVFTCLYIHNPDFIEDPAMKAFALGILKICDIAREKVNKAAVFEEEDFQSMTYGFKMANSVTDLRVTGMLKDVEDDMQRRVKSTRSRQGEERDPEVELEHQQCLAVFSRVKFTRVLLTVLIAFTKKETSAVAEAQKLMVQAADLLSAIHNSLHHGIQAQNDTTKGDHPIMMGFEPLVNQRLLPPTFPRYAKIIKREEMVSYFARLIDRIKTVCEVVNLTNLHCILDFFCEFSEQSPCVLSRSLLQTTFLVDNKKVFGTHLMQDMVKDALRSFVSPPVLSPKCYLYNNHQAKDCIDSFVTHCVRPFCSLIQIHGHNRARQRDKLGHILEEFATLQDEAEKVDAALHTMLLKQEPQRQHLACLGTWVLYHNLRIMIQYLLSGFELELYSMHEYYYIYWYLSEFLYAWLMSTLSRADGSQMAEERIMEEQQKGRSSKKTKKKKKVRPLSREITMSQAYQNMCAGMFKTMVAFDMDGKVRKPKFELDSEQVRYEHRFAPFNSVMTPPPVHYLQFKEMSDLNKYSPPPQSPELYVAASKHFQQAKMILENIPNPDHEVNRILKVAKPNFVVMKLLAGGHKKESKVPPEFDFSAHKYFPVVKLV</sequence>
<organism>
    <name type="scientific">Macaca fascicularis</name>
    <name type="common">Crab-eating macaque</name>
    <name type="synonym">Cynomolgus monkey</name>
    <dbReference type="NCBI Taxonomy" id="9541"/>
    <lineage>
        <taxon>Eukaryota</taxon>
        <taxon>Metazoa</taxon>
        <taxon>Chordata</taxon>
        <taxon>Craniata</taxon>
        <taxon>Vertebrata</taxon>
        <taxon>Euteleostomi</taxon>
        <taxon>Mammalia</taxon>
        <taxon>Eutheria</taxon>
        <taxon>Euarchontoglires</taxon>
        <taxon>Primates</taxon>
        <taxon>Haplorrhini</taxon>
        <taxon>Catarrhini</taxon>
        <taxon>Cercopithecidae</taxon>
        <taxon>Cercopithecinae</taxon>
        <taxon>Macaca</taxon>
    </lineage>
</organism>
<keyword id="KW-0963">Cytoplasm</keyword>
<keyword id="KW-0597">Phosphoprotein</keyword>
<keyword id="KW-1185">Reference proteome</keyword>
<accession>Q4R708</accession>
<proteinExistence type="evidence at transcript level"/>
<dbReference type="EMBL" id="AB169022">
    <property type="protein sequence ID" value="BAE01116.1"/>
    <property type="molecule type" value="mRNA"/>
</dbReference>
<dbReference type="RefSeq" id="NP_001274610.1">
    <property type="nucleotide sequence ID" value="NM_001287681.1"/>
</dbReference>
<dbReference type="RefSeq" id="XP_005582114.1">
    <property type="nucleotide sequence ID" value="XM_005582057.4"/>
</dbReference>
<dbReference type="RefSeq" id="XP_005582115.1">
    <property type="nucleotide sequence ID" value="XM_005582058.4"/>
</dbReference>
<dbReference type="RefSeq" id="XP_005582116.1">
    <property type="nucleotide sequence ID" value="XM_005582059.4"/>
</dbReference>
<dbReference type="RefSeq" id="XP_005582117.1">
    <property type="nucleotide sequence ID" value="XM_005582060.4"/>
</dbReference>
<dbReference type="RefSeq" id="XP_005582118.1">
    <property type="nucleotide sequence ID" value="XM_005582061.4"/>
</dbReference>
<dbReference type="RefSeq" id="XP_045228958.1">
    <property type="nucleotide sequence ID" value="XM_045373023.2"/>
</dbReference>
<dbReference type="SMR" id="Q4R708"/>
<dbReference type="STRING" id="9541.ENSMFAP00000029328"/>
<dbReference type="Ensembl" id="ENSMFAT00000003505.2">
    <property type="protein sequence ID" value="ENSMFAP00000029309.1"/>
    <property type="gene ID" value="ENSMFAG00000041931.2"/>
</dbReference>
<dbReference type="GeneID" id="102137023"/>
<dbReference type="CTD" id="60560"/>
<dbReference type="VEuPathDB" id="HostDB:ENSMFAG00000041931"/>
<dbReference type="eggNOG" id="KOG2343">
    <property type="taxonomic scope" value="Eukaryota"/>
</dbReference>
<dbReference type="GeneTree" id="ENSGT00390000002445"/>
<dbReference type="Proteomes" id="UP000233100">
    <property type="component" value="Chromosome 15"/>
</dbReference>
<dbReference type="Bgee" id="ENSMFAG00000041931">
    <property type="expression patterns" value="Expressed in heart and 13 other cell types or tissues"/>
</dbReference>
<dbReference type="GO" id="GO:0005737">
    <property type="term" value="C:cytoplasm"/>
    <property type="evidence" value="ECO:0000250"/>
    <property type="project" value="UniProtKB"/>
</dbReference>
<dbReference type="GO" id="GO:0005829">
    <property type="term" value="C:cytosol"/>
    <property type="evidence" value="ECO:0007669"/>
    <property type="project" value="Ensembl"/>
</dbReference>
<dbReference type="GO" id="GO:0031417">
    <property type="term" value="C:NatC complex"/>
    <property type="evidence" value="ECO:0000250"/>
    <property type="project" value="UniProtKB"/>
</dbReference>
<dbReference type="GO" id="GO:0005654">
    <property type="term" value="C:nucleoplasm"/>
    <property type="evidence" value="ECO:0007669"/>
    <property type="project" value="Ensembl"/>
</dbReference>
<dbReference type="GO" id="GO:0005886">
    <property type="term" value="C:plasma membrane"/>
    <property type="evidence" value="ECO:0007669"/>
    <property type="project" value="Ensembl"/>
</dbReference>
<dbReference type="GO" id="GO:0043066">
    <property type="term" value="P:negative regulation of apoptotic process"/>
    <property type="evidence" value="ECO:0000250"/>
    <property type="project" value="UniProtKB"/>
</dbReference>
<dbReference type="GO" id="GO:0048659">
    <property type="term" value="P:smooth muscle cell proliferation"/>
    <property type="evidence" value="ECO:0000250"/>
    <property type="project" value="UniProtKB"/>
</dbReference>
<dbReference type="InterPro" id="IPR007244">
    <property type="entry name" value="Naa35/Mak10"/>
</dbReference>
<dbReference type="PANTHER" id="PTHR21373">
    <property type="entry name" value="GLUCOSE REPRESSIBLE PROTEIN MAK10"/>
    <property type="match status" value="1"/>
</dbReference>
<dbReference type="PANTHER" id="PTHR21373:SF0">
    <property type="entry name" value="N-ALPHA-ACETYLTRANSFERASE 35, NATC AUXILIARY SUBUNIT"/>
    <property type="match status" value="1"/>
</dbReference>
<dbReference type="Pfam" id="PF04112">
    <property type="entry name" value="Mak10"/>
    <property type="match status" value="2"/>
</dbReference>
<reference key="1">
    <citation type="submission" date="2005-06" db="EMBL/GenBank/DDBJ databases">
        <title>DNA sequences of macaque genes expressed in brain or testis and its evolutionary implications.</title>
        <authorList>
            <consortium name="International consortium for macaque cDNA sequencing and analysis"/>
        </authorList>
    </citation>
    <scope>NUCLEOTIDE SEQUENCE [LARGE SCALE MRNA]</scope>
    <source>
        <tissue>Testis</tissue>
    </source>
</reference>
<evidence type="ECO:0000250" key="1">
    <source>
        <dbReference type="UniProtKB" id="Q5VZE5"/>
    </source>
</evidence>
<evidence type="ECO:0000256" key="2">
    <source>
        <dbReference type="SAM" id="MobiDB-lite"/>
    </source>
</evidence>
<evidence type="ECO:0000305" key="3"/>
<name>NAA35_MACFA</name>
<protein>
    <recommendedName>
        <fullName>N-alpha-acetyltransferase 35, NatC auxiliary subunit</fullName>
    </recommendedName>
    <alternativeName>
        <fullName>Protein MAK10 homolog</fullName>
    </alternativeName>
</protein>
<feature type="chain" id="PRO_0000308615" description="N-alpha-acetyltransferase 35, NatC auxiliary subunit">
    <location>
        <begin position="1"/>
        <end position="725"/>
    </location>
</feature>
<feature type="region of interest" description="Disordered" evidence="2">
    <location>
        <begin position="548"/>
        <end position="573"/>
    </location>
</feature>
<feature type="compositionally biased region" description="Basic residues" evidence="2">
    <location>
        <begin position="558"/>
        <end position="571"/>
    </location>
</feature>
<feature type="modified residue" description="Phosphoserine" evidence="1">
    <location>
        <position position="187"/>
    </location>
</feature>
<gene>
    <name type="primary">NAA35</name>
    <name type="synonym">MAK10</name>
    <name type="ORF">QtsA-16666</name>
</gene>